<protein>
    <recommendedName>
        <fullName evidence="1">Fe/S biogenesis protein NfuA</fullName>
    </recommendedName>
</protein>
<feature type="chain" id="PRO_1000088197" description="Fe/S biogenesis protein NfuA">
    <location>
        <begin position="1"/>
        <end position="191"/>
    </location>
</feature>
<feature type="binding site" evidence="1">
    <location>
        <position position="149"/>
    </location>
    <ligand>
        <name>[4Fe-4S] cluster</name>
        <dbReference type="ChEBI" id="CHEBI:49883"/>
    </ligand>
</feature>
<feature type="binding site" evidence="1">
    <location>
        <position position="152"/>
    </location>
    <ligand>
        <name>[4Fe-4S] cluster</name>
        <dbReference type="ChEBI" id="CHEBI:49883"/>
    </ligand>
</feature>
<gene>
    <name evidence="1" type="primary">nfuA</name>
    <name type="ordered locus">SARI_04103</name>
</gene>
<keyword id="KW-0004">4Fe-4S</keyword>
<keyword id="KW-0408">Iron</keyword>
<keyword id="KW-0411">Iron-sulfur</keyword>
<keyword id="KW-0479">Metal-binding</keyword>
<keyword id="KW-1185">Reference proteome</keyword>
<evidence type="ECO:0000255" key="1">
    <source>
        <dbReference type="HAMAP-Rule" id="MF_01637"/>
    </source>
</evidence>
<name>NFUA_SALAR</name>
<dbReference type="EMBL" id="CP000880">
    <property type="protein sequence ID" value="ABX23892.1"/>
    <property type="molecule type" value="Genomic_DNA"/>
</dbReference>
<dbReference type="SMR" id="A9MMB3"/>
<dbReference type="STRING" id="41514.SARI_04103"/>
<dbReference type="KEGG" id="ses:SARI_04103"/>
<dbReference type="HOGENOM" id="CLU_094569_0_0_6"/>
<dbReference type="Proteomes" id="UP000002084">
    <property type="component" value="Chromosome"/>
</dbReference>
<dbReference type="GO" id="GO:0051539">
    <property type="term" value="F:4 iron, 4 sulfur cluster binding"/>
    <property type="evidence" value="ECO:0007669"/>
    <property type="project" value="UniProtKB-UniRule"/>
</dbReference>
<dbReference type="GO" id="GO:0005506">
    <property type="term" value="F:iron ion binding"/>
    <property type="evidence" value="ECO:0007669"/>
    <property type="project" value="InterPro"/>
</dbReference>
<dbReference type="GO" id="GO:0016226">
    <property type="term" value="P:iron-sulfur cluster assembly"/>
    <property type="evidence" value="ECO:0007669"/>
    <property type="project" value="UniProtKB-UniRule"/>
</dbReference>
<dbReference type="GO" id="GO:0051604">
    <property type="term" value="P:protein maturation"/>
    <property type="evidence" value="ECO:0007669"/>
    <property type="project" value="UniProtKB-UniRule"/>
</dbReference>
<dbReference type="FunFam" id="2.60.300.12:FF:000004">
    <property type="entry name" value="Fe/S biogenesis protein NfuA"/>
    <property type="match status" value="1"/>
</dbReference>
<dbReference type="FunFam" id="3.30.300.130:FF:000002">
    <property type="entry name" value="Fe/S biogenesis protein NfuA"/>
    <property type="match status" value="1"/>
</dbReference>
<dbReference type="Gene3D" id="3.30.300.130">
    <property type="entry name" value="Fe-S cluster assembly (FSCA)"/>
    <property type="match status" value="1"/>
</dbReference>
<dbReference type="Gene3D" id="2.60.300.12">
    <property type="entry name" value="HesB-like domain"/>
    <property type="match status" value="1"/>
</dbReference>
<dbReference type="HAMAP" id="MF_01637">
    <property type="entry name" value="Fe_S_biogen_NfuA"/>
    <property type="match status" value="1"/>
</dbReference>
<dbReference type="InterPro" id="IPR017726">
    <property type="entry name" value="Fe/S_biogenesis_protein_NfuA"/>
</dbReference>
<dbReference type="InterPro" id="IPR000361">
    <property type="entry name" value="FeS_biogenesis"/>
</dbReference>
<dbReference type="InterPro" id="IPR034904">
    <property type="entry name" value="FSCA_dom_sf"/>
</dbReference>
<dbReference type="InterPro" id="IPR035903">
    <property type="entry name" value="HesB-like_dom_sf"/>
</dbReference>
<dbReference type="InterPro" id="IPR001075">
    <property type="entry name" value="NIF_FeS_clus_asmbl_NifU_C"/>
</dbReference>
<dbReference type="NCBIfam" id="NF008392">
    <property type="entry name" value="PRK11190.1"/>
    <property type="match status" value="1"/>
</dbReference>
<dbReference type="NCBIfam" id="TIGR03341">
    <property type="entry name" value="YhgI_GntY"/>
    <property type="match status" value="1"/>
</dbReference>
<dbReference type="PANTHER" id="PTHR11178:SF51">
    <property type="entry name" value="FE_S BIOGENESIS PROTEIN NFUA"/>
    <property type="match status" value="1"/>
</dbReference>
<dbReference type="PANTHER" id="PTHR11178">
    <property type="entry name" value="IRON-SULFUR CLUSTER SCAFFOLD PROTEIN NFU-RELATED"/>
    <property type="match status" value="1"/>
</dbReference>
<dbReference type="Pfam" id="PF01521">
    <property type="entry name" value="Fe-S_biosyn"/>
    <property type="match status" value="1"/>
</dbReference>
<dbReference type="Pfam" id="PF01106">
    <property type="entry name" value="NifU"/>
    <property type="match status" value="1"/>
</dbReference>
<dbReference type="SUPFAM" id="SSF117916">
    <property type="entry name" value="Fe-S cluster assembly (FSCA) domain-like"/>
    <property type="match status" value="1"/>
</dbReference>
<dbReference type="SUPFAM" id="SSF89360">
    <property type="entry name" value="HesB-like domain"/>
    <property type="match status" value="1"/>
</dbReference>
<proteinExistence type="inferred from homology"/>
<sequence>MIRISDAAQAHFAKLLANQEEGTQIRVFVINPGTPNAECGVSYCPPDAVEATDTALKFDLLTAYVDELSAPYLEDAEIDFVTDQLGSQLTLKAPNAKMRKVADDAPLMERVEYVLQSQINPQLAGHGGRVSLMEITDEGYAILQFGGGCNGCSMVDVTLKEGIEKQLLNEFPELKGVRDLTEHQRGEHSYY</sequence>
<reference key="1">
    <citation type="submission" date="2007-11" db="EMBL/GenBank/DDBJ databases">
        <authorList>
            <consortium name="The Salmonella enterica serovar Arizonae Genome Sequencing Project"/>
            <person name="McClelland M."/>
            <person name="Sanderson E.K."/>
            <person name="Porwollik S."/>
            <person name="Spieth J."/>
            <person name="Clifton W.S."/>
            <person name="Fulton R."/>
            <person name="Chunyan W."/>
            <person name="Wollam A."/>
            <person name="Shah N."/>
            <person name="Pepin K."/>
            <person name="Bhonagiri V."/>
            <person name="Nash W."/>
            <person name="Johnson M."/>
            <person name="Thiruvilangam P."/>
            <person name="Wilson R."/>
        </authorList>
    </citation>
    <scope>NUCLEOTIDE SEQUENCE [LARGE SCALE GENOMIC DNA]</scope>
    <source>
        <strain>ATCC BAA-731 / CDC346-86 / RSK2980</strain>
    </source>
</reference>
<comment type="function">
    <text evidence="1">Involved in iron-sulfur cluster biogenesis. Binds a 4Fe-4S cluster, can transfer this cluster to apoproteins, and thereby intervenes in the maturation of Fe/S proteins. Could also act as a scaffold/chaperone for damaged Fe/S proteins.</text>
</comment>
<comment type="cofactor">
    <cofactor evidence="1">
        <name>[4Fe-4S] cluster</name>
        <dbReference type="ChEBI" id="CHEBI:49883"/>
    </cofactor>
    <text evidence="1">Binds 1 [4Fe-4S] cluster per subunit. The cluster is presumably bound at the interface of two monomers.</text>
</comment>
<comment type="subunit">
    <text evidence="1">Homodimer.</text>
</comment>
<comment type="similarity">
    <text evidence="1">Belongs to the NfuA family.</text>
</comment>
<organism>
    <name type="scientific">Salmonella arizonae (strain ATCC BAA-731 / CDC346-86 / RSK2980)</name>
    <dbReference type="NCBI Taxonomy" id="41514"/>
    <lineage>
        <taxon>Bacteria</taxon>
        <taxon>Pseudomonadati</taxon>
        <taxon>Pseudomonadota</taxon>
        <taxon>Gammaproteobacteria</taxon>
        <taxon>Enterobacterales</taxon>
        <taxon>Enterobacteriaceae</taxon>
        <taxon>Salmonella</taxon>
    </lineage>
</organism>
<accession>A9MMB3</accession>